<keyword id="KW-0004">4Fe-4S</keyword>
<keyword id="KW-0342">GTP-binding</keyword>
<keyword id="KW-0408">Iron</keyword>
<keyword id="KW-0411">Iron-sulfur</keyword>
<keyword id="KW-0456">Lyase</keyword>
<keyword id="KW-0479">Metal-binding</keyword>
<keyword id="KW-0501">Molybdenum cofactor biosynthesis</keyword>
<keyword id="KW-0547">Nucleotide-binding</keyword>
<keyword id="KW-1185">Reference proteome</keyword>
<keyword id="KW-0949">S-adenosyl-L-methionine</keyword>
<reference key="1">
    <citation type="journal article" date="2010" name="PLoS ONE">
        <title>Genome sequence of Cronobacter sakazakii BAA-894 and comparative genomic hybridization analysis with other Cronobacter species.</title>
        <authorList>
            <person name="Kucerova E."/>
            <person name="Clifton S.W."/>
            <person name="Xia X.Q."/>
            <person name="Long F."/>
            <person name="Porwollik S."/>
            <person name="Fulton L."/>
            <person name="Fronick C."/>
            <person name="Minx P."/>
            <person name="Kyung K."/>
            <person name="Warren W."/>
            <person name="Fulton R."/>
            <person name="Feng D."/>
            <person name="Wollam A."/>
            <person name="Shah N."/>
            <person name="Bhonagiri V."/>
            <person name="Nash W.E."/>
            <person name="Hallsworth-Pepin K."/>
            <person name="Wilson R.K."/>
            <person name="McClelland M."/>
            <person name="Forsythe S.J."/>
        </authorList>
    </citation>
    <scope>NUCLEOTIDE SEQUENCE [LARGE SCALE GENOMIC DNA]</scope>
    <source>
        <strain>ATCC BAA-894</strain>
    </source>
</reference>
<name>MOAA_CROS8</name>
<protein>
    <recommendedName>
        <fullName evidence="1">GTP 3',8-cyclase</fullName>
        <ecNumber evidence="1">4.1.99.22</ecNumber>
    </recommendedName>
    <alternativeName>
        <fullName evidence="1">Molybdenum cofactor biosynthesis protein A</fullName>
    </alternativeName>
</protein>
<organism>
    <name type="scientific">Cronobacter sakazakii (strain ATCC BAA-894)</name>
    <name type="common">Enterobacter sakazakii</name>
    <dbReference type="NCBI Taxonomy" id="290339"/>
    <lineage>
        <taxon>Bacteria</taxon>
        <taxon>Pseudomonadati</taxon>
        <taxon>Pseudomonadota</taxon>
        <taxon>Gammaproteobacteria</taxon>
        <taxon>Enterobacterales</taxon>
        <taxon>Enterobacteriaceae</taxon>
        <taxon>Cronobacter</taxon>
    </lineage>
</organism>
<accession>A7MJ10</accession>
<sequence>MASQLTDAFARKFYYLRLSVTDVCNFRCTYCLPDGYKPAGVTNKGFLSLDEIRRVTRAFANLGTEKVRLTGGEPSLRRDFCDIIAAVRENPSIRQIAVTTNGYRLARDVAQWREAGLTAVNVSVDSLDARQFHAITGQDKFRQVMAGIDAAFDAGFEKVKVNTVLMRDVNHHQLDTFLNWIQSRPIQLRFIELMETGEGSDLFRKHHISGATIRDELLKRGWIHQLRSRADGPAQVFCHPDYQGEIGLIMPYEKDFCASCNRLRVSSVGKLHLCLFGDGGVDLRDLLAEEGQQAALMARIETALLGKKQTHFLHQGNTGITQNLSYIGG</sequence>
<evidence type="ECO:0000255" key="1">
    <source>
        <dbReference type="HAMAP-Rule" id="MF_01225"/>
    </source>
</evidence>
<evidence type="ECO:0000255" key="2">
    <source>
        <dbReference type="PROSITE-ProRule" id="PRU01266"/>
    </source>
</evidence>
<proteinExistence type="inferred from homology"/>
<feature type="chain" id="PRO_1000054191" description="GTP 3',8-cyclase">
    <location>
        <begin position="1"/>
        <end position="329"/>
    </location>
</feature>
<feature type="domain" description="Radical SAM core" evidence="2">
    <location>
        <begin position="8"/>
        <end position="234"/>
    </location>
</feature>
<feature type="binding site" evidence="1">
    <location>
        <position position="17"/>
    </location>
    <ligand>
        <name>GTP</name>
        <dbReference type="ChEBI" id="CHEBI:37565"/>
    </ligand>
</feature>
<feature type="binding site" evidence="1">
    <location>
        <position position="24"/>
    </location>
    <ligand>
        <name>[4Fe-4S] cluster</name>
        <dbReference type="ChEBI" id="CHEBI:49883"/>
        <label>1</label>
        <note>4Fe-4S-S-AdoMet</note>
    </ligand>
</feature>
<feature type="binding site" evidence="1">
    <location>
        <position position="28"/>
    </location>
    <ligand>
        <name>[4Fe-4S] cluster</name>
        <dbReference type="ChEBI" id="CHEBI:49883"/>
        <label>1</label>
        <note>4Fe-4S-S-AdoMet</note>
    </ligand>
</feature>
<feature type="binding site" evidence="1">
    <location>
        <position position="30"/>
    </location>
    <ligand>
        <name>S-adenosyl-L-methionine</name>
        <dbReference type="ChEBI" id="CHEBI:59789"/>
    </ligand>
</feature>
<feature type="binding site" evidence="1">
    <location>
        <position position="31"/>
    </location>
    <ligand>
        <name>[4Fe-4S] cluster</name>
        <dbReference type="ChEBI" id="CHEBI:49883"/>
        <label>1</label>
        <note>4Fe-4S-S-AdoMet</note>
    </ligand>
</feature>
<feature type="binding site" evidence="1">
    <location>
        <position position="68"/>
    </location>
    <ligand>
        <name>GTP</name>
        <dbReference type="ChEBI" id="CHEBI:37565"/>
    </ligand>
</feature>
<feature type="binding site" evidence="1">
    <location>
        <position position="72"/>
    </location>
    <ligand>
        <name>S-adenosyl-L-methionine</name>
        <dbReference type="ChEBI" id="CHEBI:59789"/>
    </ligand>
</feature>
<feature type="binding site" evidence="1">
    <location>
        <position position="99"/>
    </location>
    <ligand>
        <name>GTP</name>
        <dbReference type="ChEBI" id="CHEBI:37565"/>
    </ligand>
</feature>
<feature type="binding site" evidence="1">
    <location>
        <position position="123"/>
    </location>
    <ligand>
        <name>S-adenosyl-L-methionine</name>
        <dbReference type="ChEBI" id="CHEBI:59789"/>
    </ligand>
</feature>
<feature type="binding site" evidence="1">
    <location>
        <position position="160"/>
    </location>
    <ligand>
        <name>GTP</name>
        <dbReference type="ChEBI" id="CHEBI:37565"/>
    </ligand>
</feature>
<feature type="binding site" evidence="1">
    <location>
        <position position="194"/>
    </location>
    <ligand>
        <name>S-adenosyl-L-methionine</name>
        <dbReference type="ChEBI" id="CHEBI:59789"/>
    </ligand>
</feature>
<feature type="binding site" evidence="1">
    <location>
        <position position="257"/>
    </location>
    <ligand>
        <name>[4Fe-4S] cluster</name>
        <dbReference type="ChEBI" id="CHEBI:49883"/>
        <label>2</label>
        <note>4Fe-4S-substrate</note>
    </ligand>
</feature>
<feature type="binding site" evidence="1">
    <location>
        <position position="260"/>
    </location>
    <ligand>
        <name>[4Fe-4S] cluster</name>
        <dbReference type="ChEBI" id="CHEBI:49883"/>
        <label>2</label>
        <note>4Fe-4S-substrate</note>
    </ligand>
</feature>
<feature type="binding site" evidence="1">
    <location>
        <begin position="262"/>
        <end position="264"/>
    </location>
    <ligand>
        <name>GTP</name>
        <dbReference type="ChEBI" id="CHEBI:37565"/>
    </ligand>
</feature>
<feature type="binding site" evidence="1">
    <location>
        <position position="274"/>
    </location>
    <ligand>
        <name>[4Fe-4S] cluster</name>
        <dbReference type="ChEBI" id="CHEBI:49883"/>
        <label>2</label>
        <note>4Fe-4S-substrate</note>
    </ligand>
</feature>
<comment type="function">
    <text evidence="1">Catalyzes the cyclization of GTP to (8S)-3',8-cyclo-7,8-dihydroguanosine 5'-triphosphate.</text>
</comment>
<comment type="catalytic activity">
    <reaction evidence="1">
        <text>GTP + AH2 + S-adenosyl-L-methionine = (8S)-3',8-cyclo-7,8-dihydroguanosine 5'-triphosphate + 5'-deoxyadenosine + L-methionine + A + H(+)</text>
        <dbReference type="Rhea" id="RHEA:49576"/>
        <dbReference type="ChEBI" id="CHEBI:13193"/>
        <dbReference type="ChEBI" id="CHEBI:15378"/>
        <dbReference type="ChEBI" id="CHEBI:17319"/>
        <dbReference type="ChEBI" id="CHEBI:17499"/>
        <dbReference type="ChEBI" id="CHEBI:37565"/>
        <dbReference type="ChEBI" id="CHEBI:57844"/>
        <dbReference type="ChEBI" id="CHEBI:59789"/>
        <dbReference type="ChEBI" id="CHEBI:131766"/>
        <dbReference type="EC" id="4.1.99.22"/>
    </reaction>
</comment>
<comment type="cofactor">
    <cofactor evidence="1">
        <name>[4Fe-4S] cluster</name>
        <dbReference type="ChEBI" id="CHEBI:49883"/>
    </cofactor>
    <text evidence="1">Binds 2 [4Fe-4S] clusters. Binds 1 [4Fe-4S] cluster coordinated with 3 cysteines and an exchangeable S-adenosyl-L-methionine and 1 [4Fe-4S] cluster coordinated with 3 cysteines and the GTP-derived substrate.</text>
</comment>
<comment type="pathway">
    <text evidence="1">Cofactor biosynthesis; molybdopterin biosynthesis.</text>
</comment>
<comment type="subunit">
    <text evidence="1">Monomer and homodimer.</text>
</comment>
<comment type="similarity">
    <text evidence="1">Belongs to the radical SAM superfamily. MoaA family.</text>
</comment>
<gene>
    <name evidence="1" type="primary">moaA</name>
    <name type="ordered locus">ESA_02563</name>
</gene>
<dbReference type="EC" id="4.1.99.22" evidence="1"/>
<dbReference type="EMBL" id="CP000783">
    <property type="protein sequence ID" value="ABU77808.1"/>
    <property type="molecule type" value="Genomic_DNA"/>
</dbReference>
<dbReference type="RefSeq" id="WP_004387506.1">
    <property type="nucleotide sequence ID" value="NC_009778.1"/>
</dbReference>
<dbReference type="SMR" id="A7MJ10"/>
<dbReference type="GeneID" id="56731364"/>
<dbReference type="KEGG" id="esa:ESA_02563"/>
<dbReference type="HOGENOM" id="CLU_009273_0_1_6"/>
<dbReference type="UniPathway" id="UPA00344"/>
<dbReference type="Proteomes" id="UP000000260">
    <property type="component" value="Chromosome"/>
</dbReference>
<dbReference type="GO" id="GO:0051539">
    <property type="term" value="F:4 iron, 4 sulfur cluster binding"/>
    <property type="evidence" value="ECO:0007669"/>
    <property type="project" value="UniProtKB-UniRule"/>
</dbReference>
<dbReference type="GO" id="GO:0061799">
    <property type="term" value="F:cyclic pyranopterin monophosphate synthase activity"/>
    <property type="evidence" value="ECO:0007669"/>
    <property type="project" value="TreeGrafter"/>
</dbReference>
<dbReference type="GO" id="GO:0061798">
    <property type="term" value="F:GTP 3',8'-cyclase activity"/>
    <property type="evidence" value="ECO:0007669"/>
    <property type="project" value="UniProtKB-UniRule"/>
</dbReference>
<dbReference type="GO" id="GO:0005525">
    <property type="term" value="F:GTP binding"/>
    <property type="evidence" value="ECO:0007669"/>
    <property type="project" value="UniProtKB-UniRule"/>
</dbReference>
<dbReference type="GO" id="GO:0046872">
    <property type="term" value="F:metal ion binding"/>
    <property type="evidence" value="ECO:0007669"/>
    <property type="project" value="UniProtKB-KW"/>
</dbReference>
<dbReference type="GO" id="GO:1904047">
    <property type="term" value="F:S-adenosyl-L-methionine binding"/>
    <property type="evidence" value="ECO:0007669"/>
    <property type="project" value="UniProtKB-UniRule"/>
</dbReference>
<dbReference type="GO" id="GO:0006777">
    <property type="term" value="P:Mo-molybdopterin cofactor biosynthetic process"/>
    <property type="evidence" value="ECO:0007669"/>
    <property type="project" value="UniProtKB-UniRule"/>
</dbReference>
<dbReference type="CDD" id="cd01335">
    <property type="entry name" value="Radical_SAM"/>
    <property type="match status" value="1"/>
</dbReference>
<dbReference type="CDD" id="cd21117">
    <property type="entry name" value="Twitch_MoaA"/>
    <property type="match status" value="1"/>
</dbReference>
<dbReference type="FunFam" id="3.20.20.70:FF:000057">
    <property type="entry name" value="GTP 3',8-cyclase"/>
    <property type="match status" value="1"/>
</dbReference>
<dbReference type="Gene3D" id="3.20.20.70">
    <property type="entry name" value="Aldolase class I"/>
    <property type="match status" value="1"/>
</dbReference>
<dbReference type="HAMAP" id="MF_01225_B">
    <property type="entry name" value="MoaA_B"/>
    <property type="match status" value="1"/>
</dbReference>
<dbReference type="InterPro" id="IPR013785">
    <property type="entry name" value="Aldolase_TIM"/>
</dbReference>
<dbReference type="InterPro" id="IPR006638">
    <property type="entry name" value="Elp3/MiaA/NifB-like_rSAM"/>
</dbReference>
<dbReference type="InterPro" id="IPR013483">
    <property type="entry name" value="MoaA"/>
</dbReference>
<dbReference type="InterPro" id="IPR000385">
    <property type="entry name" value="MoaA_NifB_PqqE_Fe-S-bd_CS"/>
</dbReference>
<dbReference type="InterPro" id="IPR010505">
    <property type="entry name" value="MoaA_twitch"/>
</dbReference>
<dbReference type="InterPro" id="IPR050105">
    <property type="entry name" value="MoCo_biosynth_MoaA/MoaC"/>
</dbReference>
<dbReference type="InterPro" id="IPR007197">
    <property type="entry name" value="rSAM"/>
</dbReference>
<dbReference type="NCBIfam" id="TIGR02666">
    <property type="entry name" value="moaA"/>
    <property type="match status" value="1"/>
</dbReference>
<dbReference type="PANTHER" id="PTHR22960:SF28">
    <property type="entry name" value="GTP 3',8-CYCLASE"/>
    <property type="match status" value="1"/>
</dbReference>
<dbReference type="PANTHER" id="PTHR22960">
    <property type="entry name" value="MOLYBDOPTERIN COFACTOR SYNTHESIS PROTEIN A"/>
    <property type="match status" value="1"/>
</dbReference>
<dbReference type="Pfam" id="PF13353">
    <property type="entry name" value="Fer4_12"/>
    <property type="match status" value="1"/>
</dbReference>
<dbReference type="Pfam" id="PF06463">
    <property type="entry name" value="Mob_synth_C"/>
    <property type="match status" value="1"/>
</dbReference>
<dbReference type="Pfam" id="PF04055">
    <property type="entry name" value="Radical_SAM"/>
    <property type="match status" value="1"/>
</dbReference>
<dbReference type="SFLD" id="SFLDG01383">
    <property type="entry name" value="cyclic_pyranopterin_phosphate"/>
    <property type="match status" value="1"/>
</dbReference>
<dbReference type="SFLD" id="SFLDS00029">
    <property type="entry name" value="Radical_SAM"/>
    <property type="match status" value="1"/>
</dbReference>
<dbReference type="SMART" id="SM00729">
    <property type="entry name" value="Elp3"/>
    <property type="match status" value="1"/>
</dbReference>
<dbReference type="SUPFAM" id="SSF102114">
    <property type="entry name" value="Radical SAM enzymes"/>
    <property type="match status" value="1"/>
</dbReference>
<dbReference type="PROSITE" id="PS01305">
    <property type="entry name" value="MOAA_NIFB_PQQE"/>
    <property type="match status" value="1"/>
</dbReference>
<dbReference type="PROSITE" id="PS51918">
    <property type="entry name" value="RADICAL_SAM"/>
    <property type="match status" value="1"/>
</dbReference>